<sequence length="62" mass="6867">MPPKIHPSLSTGYFVSLDTMPPKNLCHQKVCHLGMKADLFALLKHAEIMKHIASFNVSVHGV</sequence>
<organism>
    <name type="scientific">Caenorhabditis elegans</name>
    <dbReference type="NCBI Taxonomy" id="6239"/>
    <lineage>
        <taxon>Eukaryota</taxon>
        <taxon>Metazoa</taxon>
        <taxon>Ecdysozoa</taxon>
        <taxon>Nematoda</taxon>
        <taxon>Chromadorea</taxon>
        <taxon>Rhabditida</taxon>
        <taxon>Rhabditina</taxon>
        <taxon>Rhabditomorpha</taxon>
        <taxon>Rhabditoidea</taxon>
        <taxon>Rhabditidae</taxon>
        <taxon>Peloderinae</taxon>
        <taxon>Caenorhabditis</taxon>
    </lineage>
</organism>
<proteinExistence type="predicted"/>
<name>YQS3_CAEEL</name>
<reference key="1">
    <citation type="journal article" date="1998" name="Science">
        <title>Genome sequence of the nematode C. elegans: a platform for investigating biology.</title>
        <authorList>
            <consortium name="The C. elegans sequencing consortium"/>
        </authorList>
    </citation>
    <scope>NUCLEOTIDE SEQUENCE [LARGE SCALE GENOMIC DNA]</scope>
    <source>
        <strain>Bristol N2</strain>
    </source>
</reference>
<feature type="chain" id="PRO_0000065305" description="Uncharacterized protein F21H12.3">
    <location>
        <begin position="1"/>
        <end position="62"/>
    </location>
</feature>
<gene>
    <name type="ORF">F21H12.3</name>
</gene>
<dbReference type="EMBL" id="FO080717">
    <property type="protein sequence ID" value="CCD66117.1"/>
    <property type="molecule type" value="Genomic_DNA"/>
</dbReference>
<dbReference type="PIR" id="T16125">
    <property type="entry name" value="T16125"/>
</dbReference>
<dbReference type="RefSeq" id="NP_495217.2">
    <property type="nucleotide sequence ID" value="NM_062816.2"/>
</dbReference>
<dbReference type="STRING" id="6239.F21H12.3.1"/>
<dbReference type="PaxDb" id="6239-F21H12.3"/>
<dbReference type="EnsemblMetazoa" id="F21H12.3.1">
    <property type="protein sequence ID" value="F21H12.3.1"/>
    <property type="gene ID" value="WBGene00017685"/>
</dbReference>
<dbReference type="UCSC" id="F21H12.3">
    <property type="organism name" value="c. elegans"/>
</dbReference>
<dbReference type="AGR" id="WB:WBGene00017685"/>
<dbReference type="WormBase" id="F21H12.3">
    <property type="protein sequence ID" value="CE52208"/>
    <property type="gene ID" value="WBGene00017685"/>
</dbReference>
<dbReference type="HOGENOM" id="CLU_2906178_0_0_1"/>
<dbReference type="InParanoid" id="Q09311"/>
<dbReference type="PRO" id="PR:Q09311"/>
<dbReference type="Proteomes" id="UP000001940">
    <property type="component" value="Chromosome II"/>
</dbReference>
<accession>Q09311</accession>
<protein>
    <recommendedName>
        <fullName>Uncharacterized protein F21H12.3</fullName>
    </recommendedName>
</protein>
<keyword id="KW-1185">Reference proteome</keyword>